<accession>Q4A087</accession>
<protein>
    <recommendedName>
        <fullName>Putative NAD(P)H nitroreductase SSP0379</fullName>
        <ecNumber>1.-.-.-</ecNumber>
    </recommendedName>
</protein>
<feature type="chain" id="PRO_0000277542" description="Putative NAD(P)H nitroreductase SSP0379">
    <location>
        <begin position="1"/>
        <end position="219"/>
    </location>
</feature>
<dbReference type="EC" id="1.-.-.-"/>
<dbReference type="EMBL" id="AP008934">
    <property type="protein sequence ID" value="BAE17524.1"/>
    <property type="status" value="ALT_INIT"/>
    <property type="molecule type" value="Genomic_DNA"/>
</dbReference>
<dbReference type="RefSeq" id="WP_041784883.1">
    <property type="nucleotide sequence ID" value="NC_007350.1"/>
</dbReference>
<dbReference type="SMR" id="Q4A087"/>
<dbReference type="GeneID" id="3617199"/>
<dbReference type="KEGG" id="ssp:SSP0379"/>
<dbReference type="PATRIC" id="fig|342451.11.peg.384"/>
<dbReference type="eggNOG" id="COG0778">
    <property type="taxonomic scope" value="Bacteria"/>
</dbReference>
<dbReference type="HOGENOM" id="CLU_070764_4_1_9"/>
<dbReference type="OrthoDB" id="9809288at2"/>
<dbReference type="Proteomes" id="UP000006371">
    <property type="component" value="Chromosome"/>
</dbReference>
<dbReference type="GO" id="GO:0005829">
    <property type="term" value="C:cytosol"/>
    <property type="evidence" value="ECO:0007669"/>
    <property type="project" value="TreeGrafter"/>
</dbReference>
<dbReference type="GO" id="GO:0046857">
    <property type="term" value="F:oxidoreductase activity, acting on other nitrogenous compounds as donors, with NAD or NADP as acceptor"/>
    <property type="evidence" value="ECO:0007669"/>
    <property type="project" value="TreeGrafter"/>
</dbReference>
<dbReference type="GO" id="GO:0046256">
    <property type="term" value="P:2,4,6-trinitrotoluene catabolic process"/>
    <property type="evidence" value="ECO:0007669"/>
    <property type="project" value="TreeGrafter"/>
</dbReference>
<dbReference type="CDD" id="cd02149">
    <property type="entry name" value="NfsB-like"/>
    <property type="match status" value="1"/>
</dbReference>
<dbReference type="Gene3D" id="3.40.109.10">
    <property type="entry name" value="NADH Oxidase"/>
    <property type="match status" value="1"/>
</dbReference>
<dbReference type="InterPro" id="IPR033878">
    <property type="entry name" value="NfsB-like"/>
</dbReference>
<dbReference type="InterPro" id="IPR029479">
    <property type="entry name" value="Nitroreductase"/>
</dbReference>
<dbReference type="InterPro" id="IPR000415">
    <property type="entry name" value="Nitroreductase-like"/>
</dbReference>
<dbReference type="InterPro" id="IPR050627">
    <property type="entry name" value="Nitroreductase/BluB"/>
</dbReference>
<dbReference type="PANTHER" id="PTHR23026">
    <property type="entry name" value="NADPH NITROREDUCTASE"/>
    <property type="match status" value="1"/>
</dbReference>
<dbReference type="PANTHER" id="PTHR23026:SF125">
    <property type="entry name" value="OXYGEN-INSENSITIVE NAD(P)H NITROREDUCTASE"/>
    <property type="match status" value="1"/>
</dbReference>
<dbReference type="Pfam" id="PF00881">
    <property type="entry name" value="Nitroreductase"/>
    <property type="match status" value="1"/>
</dbReference>
<dbReference type="SUPFAM" id="SSF55469">
    <property type="entry name" value="FMN-dependent nitroreductase-like"/>
    <property type="match status" value="1"/>
</dbReference>
<evidence type="ECO:0000305" key="1"/>
<gene>
    <name type="ordered locus">SSP0379</name>
</gene>
<reference key="1">
    <citation type="journal article" date="2005" name="Proc. Natl. Acad. Sci. U.S.A.">
        <title>Whole genome sequence of Staphylococcus saprophyticus reveals the pathogenesis of uncomplicated urinary tract infection.</title>
        <authorList>
            <person name="Kuroda M."/>
            <person name="Yamashita A."/>
            <person name="Hirakawa H."/>
            <person name="Kumano M."/>
            <person name="Morikawa K."/>
            <person name="Higashide M."/>
            <person name="Maruyama A."/>
            <person name="Inose Y."/>
            <person name="Matoba K."/>
            <person name="Toh H."/>
            <person name="Kuhara S."/>
            <person name="Hattori M."/>
            <person name="Ohta T."/>
        </authorList>
    </citation>
    <scope>NUCLEOTIDE SEQUENCE [LARGE SCALE GENOMIC DNA]</scope>
    <source>
        <strain>ATCC 15305 / DSM 20229 / NCIMB 8711 / NCTC 7292 / S-41</strain>
    </source>
</reference>
<sequence length="219" mass="25084">MTQMQQTILDAFNFRHATKRFDANKKISESDFNTILETGRLSPSSLGLEPWRFVVIQNREIRDKLKAISWGAQGQLDTASHFVLILARKNVTSQSDYVQHMIRNVKKYSEASIPATEKKFDDFQTNFHINDNDQSLLDWARKQTYIALGNMMTSAALLNIDSCPIEGFDLDAVTQFLTDDGIIDEAHFAPSVMVAFGYRETEPKDKVRQTQDDIVEWLE</sequence>
<comment type="cofactor">
    <cofactor evidence="1">
        <name>FMN</name>
        <dbReference type="ChEBI" id="CHEBI:58210"/>
    </cofactor>
</comment>
<comment type="similarity">
    <text evidence="1">Belongs to the nitroreductase family.</text>
</comment>
<comment type="sequence caution" evidence="1">
    <conflict type="erroneous initiation">
        <sequence resource="EMBL-CDS" id="BAE17524"/>
    </conflict>
</comment>
<keyword id="KW-0285">Flavoprotein</keyword>
<keyword id="KW-0288">FMN</keyword>
<keyword id="KW-0520">NAD</keyword>
<keyword id="KW-0521">NADP</keyword>
<keyword id="KW-0560">Oxidoreductase</keyword>
<keyword id="KW-1185">Reference proteome</keyword>
<organism>
    <name type="scientific">Staphylococcus saprophyticus subsp. saprophyticus (strain ATCC 15305 / DSM 20229 / NCIMB 8711 / NCTC 7292 / S-41)</name>
    <dbReference type="NCBI Taxonomy" id="342451"/>
    <lineage>
        <taxon>Bacteria</taxon>
        <taxon>Bacillati</taxon>
        <taxon>Bacillota</taxon>
        <taxon>Bacilli</taxon>
        <taxon>Bacillales</taxon>
        <taxon>Staphylococcaceae</taxon>
        <taxon>Staphylococcus</taxon>
    </lineage>
</organism>
<proteinExistence type="inferred from homology"/>
<name>Y379_STAS1</name>